<proteinExistence type="inferred from homology"/>
<name>KDGD_STRGG</name>
<keyword id="KW-0456">Lyase</keyword>
<dbReference type="EC" id="4.2.1.41" evidence="1"/>
<dbReference type="EMBL" id="AP009493">
    <property type="protein sequence ID" value="BAG22446.1"/>
    <property type="molecule type" value="Genomic_DNA"/>
</dbReference>
<dbReference type="RefSeq" id="WP_012381423.1">
    <property type="nucleotide sequence ID" value="NC_010572.1"/>
</dbReference>
<dbReference type="SMR" id="B1W1P9"/>
<dbReference type="KEGG" id="sgr:SGR_5617"/>
<dbReference type="PATRIC" id="fig|455632.4.peg.5754"/>
<dbReference type="eggNOG" id="COG0329">
    <property type="taxonomic scope" value="Bacteria"/>
</dbReference>
<dbReference type="HOGENOM" id="CLU_049343_5_2_11"/>
<dbReference type="UniPathway" id="UPA00564">
    <property type="reaction ID" value="UER00628"/>
</dbReference>
<dbReference type="Proteomes" id="UP000001685">
    <property type="component" value="Chromosome"/>
</dbReference>
<dbReference type="GO" id="GO:0008840">
    <property type="term" value="F:4-hydroxy-tetrahydrodipicolinate synthase activity"/>
    <property type="evidence" value="ECO:0007669"/>
    <property type="project" value="TreeGrafter"/>
</dbReference>
<dbReference type="GO" id="GO:0047448">
    <property type="term" value="F:5-dehydro-4-deoxyglucarate dehydratase activity"/>
    <property type="evidence" value="ECO:0007669"/>
    <property type="project" value="UniProtKB-UniRule"/>
</dbReference>
<dbReference type="GO" id="GO:0042838">
    <property type="term" value="P:D-glucarate catabolic process"/>
    <property type="evidence" value="ECO:0007669"/>
    <property type="project" value="UniProtKB-UniRule"/>
</dbReference>
<dbReference type="Gene3D" id="3.20.20.70">
    <property type="entry name" value="Aldolase class I"/>
    <property type="match status" value="1"/>
</dbReference>
<dbReference type="HAMAP" id="MF_00694">
    <property type="entry name" value="KDGDH"/>
    <property type="match status" value="1"/>
</dbReference>
<dbReference type="InterPro" id="IPR013785">
    <property type="entry name" value="Aldolase_TIM"/>
</dbReference>
<dbReference type="InterPro" id="IPR002220">
    <property type="entry name" value="DapA-like"/>
</dbReference>
<dbReference type="InterPro" id="IPR017655">
    <property type="entry name" value="Dehydro-deoxyglucarate_dehyd"/>
</dbReference>
<dbReference type="NCBIfam" id="NF002958">
    <property type="entry name" value="PRK03620.1"/>
    <property type="match status" value="1"/>
</dbReference>
<dbReference type="PANTHER" id="PTHR12128:SF19">
    <property type="entry name" value="5-DEHYDRO-4-DEOXYGLUCARATE DEHYDRATASE 2-RELATED"/>
    <property type="match status" value="1"/>
</dbReference>
<dbReference type="PANTHER" id="PTHR12128">
    <property type="entry name" value="DIHYDRODIPICOLINATE SYNTHASE"/>
    <property type="match status" value="1"/>
</dbReference>
<dbReference type="Pfam" id="PF00701">
    <property type="entry name" value="DHDPS"/>
    <property type="match status" value="1"/>
</dbReference>
<dbReference type="PIRSF" id="PIRSF001365">
    <property type="entry name" value="DHDPS"/>
    <property type="match status" value="1"/>
</dbReference>
<dbReference type="SMART" id="SM01130">
    <property type="entry name" value="DHDPS"/>
    <property type="match status" value="1"/>
</dbReference>
<dbReference type="SUPFAM" id="SSF51569">
    <property type="entry name" value="Aldolase"/>
    <property type="match status" value="1"/>
</dbReference>
<protein>
    <recommendedName>
        <fullName evidence="1">Probable 5-dehydro-4-deoxyglucarate dehydratase</fullName>
        <ecNumber evidence="1">4.2.1.41</ecNumber>
    </recommendedName>
    <alternativeName>
        <fullName evidence="1">5-keto-4-deoxy-glucarate dehydratase</fullName>
        <shortName evidence="1">KDGDH</shortName>
    </alternativeName>
</protein>
<sequence>MTSAPLAARLRDVAGPLFFPVTAFGPDGAVDLAVFRAHVRAGIDAGAAAVFACCGTGEFHALTPEEFRLAVGAAVEESAGQVPVLAGAGYGTALAVQYARAAEEAGADGLLAMPPYLVVADQQGLLHHYAALAAATGLETIVYQRDNAVFTPETVVALARTPGVIGLKDGHGDLDLMQRIVSAVRTHRPGGDFLYFNGLPTAELTGPAYRGIGVTLYSSAVFAFAPDIALAFYRALDSGDDALVDGLLDHFYRPLVELRAQGRGYAVSLVKAGVRLQGLDVGEVRTPLTEPTAAHVKDLIEIIASGRALLAEHAAAGGGA</sequence>
<evidence type="ECO:0000255" key="1">
    <source>
        <dbReference type="HAMAP-Rule" id="MF_00694"/>
    </source>
</evidence>
<comment type="catalytic activity">
    <reaction evidence="1">
        <text>5-dehydro-4-deoxy-D-glucarate + H(+) = 2,5-dioxopentanoate + CO2 + H2O</text>
        <dbReference type="Rhea" id="RHEA:24608"/>
        <dbReference type="ChEBI" id="CHEBI:15377"/>
        <dbReference type="ChEBI" id="CHEBI:15378"/>
        <dbReference type="ChEBI" id="CHEBI:16526"/>
        <dbReference type="ChEBI" id="CHEBI:42819"/>
        <dbReference type="ChEBI" id="CHEBI:58136"/>
        <dbReference type="EC" id="4.2.1.41"/>
    </reaction>
</comment>
<comment type="pathway">
    <text evidence="1">Carbohydrate acid metabolism; D-glucarate degradation; 2,5-dioxopentanoate from D-glucarate: step 2/2.</text>
</comment>
<comment type="similarity">
    <text evidence="1">Belongs to the DapA family.</text>
</comment>
<feature type="chain" id="PRO_1000132274" description="Probable 5-dehydro-4-deoxyglucarate dehydratase">
    <location>
        <begin position="1"/>
        <end position="320"/>
    </location>
</feature>
<gene>
    <name type="ordered locus">SGR_5617</name>
</gene>
<organism>
    <name type="scientific">Streptomyces griseus subsp. griseus (strain JCM 4626 / CBS 651.72 / NBRC 13350 / KCC S-0626 / ISP 5235)</name>
    <dbReference type="NCBI Taxonomy" id="455632"/>
    <lineage>
        <taxon>Bacteria</taxon>
        <taxon>Bacillati</taxon>
        <taxon>Actinomycetota</taxon>
        <taxon>Actinomycetes</taxon>
        <taxon>Kitasatosporales</taxon>
        <taxon>Streptomycetaceae</taxon>
        <taxon>Streptomyces</taxon>
    </lineage>
</organism>
<reference key="1">
    <citation type="journal article" date="2008" name="J. Bacteriol.">
        <title>Genome sequence of the streptomycin-producing microorganism Streptomyces griseus IFO 13350.</title>
        <authorList>
            <person name="Ohnishi Y."/>
            <person name="Ishikawa J."/>
            <person name="Hara H."/>
            <person name="Suzuki H."/>
            <person name="Ikenoya M."/>
            <person name="Ikeda H."/>
            <person name="Yamashita A."/>
            <person name="Hattori M."/>
            <person name="Horinouchi S."/>
        </authorList>
    </citation>
    <scope>NUCLEOTIDE SEQUENCE [LARGE SCALE GENOMIC DNA]</scope>
    <source>
        <strain>JCM 4626 / CBS 651.72 / NBRC 13350 / KCC S-0626 / ISP 5235</strain>
    </source>
</reference>
<accession>B1W1P9</accession>